<sequence>MTIKIIEGDFKSATGKYALLVSRWNSFVVEHLKEGALDTLRRHGVSDDDIEIVYAPGAFEFPLAAQKLAASGDYDAIVALGAVIRGGTPHFDYVAGECTKGLAQVSLATGIPVAFGVLTVDSIEQAIERSGTKAGNKGSEAAETALEMVSLLGKL</sequence>
<keyword id="KW-1185">Reference proteome</keyword>
<keyword id="KW-0686">Riboflavin biosynthesis</keyword>
<keyword id="KW-0808">Transferase</keyword>
<feature type="chain" id="PRO_1000203806" description="6,7-dimethyl-8-ribityllumazine synthase">
    <location>
        <begin position="1"/>
        <end position="155"/>
    </location>
</feature>
<feature type="active site" description="Proton donor" evidence="1">
    <location>
        <position position="90"/>
    </location>
</feature>
<feature type="binding site" evidence="1">
    <location>
        <position position="24"/>
    </location>
    <ligand>
        <name>5-amino-6-(D-ribitylamino)uracil</name>
        <dbReference type="ChEBI" id="CHEBI:15934"/>
    </ligand>
</feature>
<feature type="binding site" evidence="1">
    <location>
        <begin position="58"/>
        <end position="60"/>
    </location>
    <ligand>
        <name>5-amino-6-(D-ribitylamino)uracil</name>
        <dbReference type="ChEBI" id="CHEBI:15934"/>
    </ligand>
</feature>
<feature type="binding site" evidence="1">
    <location>
        <begin position="82"/>
        <end position="84"/>
    </location>
    <ligand>
        <name>5-amino-6-(D-ribitylamino)uracil</name>
        <dbReference type="ChEBI" id="CHEBI:15934"/>
    </ligand>
</feature>
<feature type="binding site" evidence="1">
    <location>
        <begin position="87"/>
        <end position="88"/>
    </location>
    <ligand>
        <name>(2S)-2-hydroxy-3-oxobutyl phosphate</name>
        <dbReference type="ChEBI" id="CHEBI:58830"/>
    </ligand>
</feature>
<feature type="binding site" evidence="1">
    <location>
        <position position="115"/>
    </location>
    <ligand>
        <name>5-amino-6-(D-ribitylamino)uracil</name>
        <dbReference type="ChEBI" id="CHEBI:15934"/>
    </ligand>
</feature>
<feature type="binding site" evidence="1">
    <location>
        <position position="129"/>
    </location>
    <ligand>
        <name>(2S)-2-hydroxy-3-oxobutyl phosphate</name>
        <dbReference type="ChEBI" id="CHEBI:58830"/>
    </ligand>
</feature>
<comment type="function">
    <text evidence="1">Catalyzes the formation of 6,7-dimethyl-8-ribityllumazine by condensation of 5-amino-6-(D-ribitylamino)uracil with 3,4-dihydroxy-2-butanone 4-phosphate. This is the penultimate step in the biosynthesis of riboflavin.</text>
</comment>
<comment type="catalytic activity">
    <reaction evidence="1">
        <text>(2S)-2-hydroxy-3-oxobutyl phosphate + 5-amino-6-(D-ribitylamino)uracil = 6,7-dimethyl-8-(1-D-ribityl)lumazine + phosphate + 2 H2O + H(+)</text>
        <dbReference type="Rhea" id="RHEA:26152"/>
        <dbReference type="ChEBI" id="CHEBI:15377"/>
        <dbReference type="ChEBI" id="CHEBI:15378"/>
        <dbReference type="ChEBI" id="CHEBI:15934"/>
        <dbReference type="ChEBI" id="CHEBI:43474"/>
        <dbReference type="ChEBI" id="CHEBI:58201"/>
        <dbReference type="ChEBI" id="CHEBI:58830"/>
        <dbReference type="EC" id="2.5.1.78"/>
    </reaction>
</comment>
<comment type="pathway">
    <text evidence="1">Cofactor biosynthesis; riboflavin biosynthesis; riboflavin from 2-hydroxy-3-oxobutyl phosphate and 5-amino-6-(D-ribitylamino)uracil: step 1/2.</text>
</comment>
<comment type="subunit">
    <text evidence="1">Forms an icosahedral capsid composed of 60 subunits, arranged as a dodecamer of pentamers.</text>
</comment>
<comment type="similarity">
    <text evidence="1">Belongs to the DMRL synthase family.</text>
</comment>
<reference key="1">
    <citation type="journal article" date="2009" name="PLoS ONE">
        <title>The complete genome of Teredinibacter turnerae T7901: an intracellular endosymbiont of marine wood-boring bivalves (shipworms).</title>
        <authorList>
            <person name="Yang J.C."/>
            <person name="Madupu R."/>
            <person name="Durkin A.S."/>
            <person name="Ekborg N.A."/>
            <person name="Pedamallu C.S."/>
            <person name="Hostetler J.B."/>
            <person name="Radune D."/>
            <person name="Toms B.S."/>
            <person name="Henrissat B."/>
            <person name="Coutinho P.M."/>
            <person name="Schwarz S."/>
            <person name="Field L."/>
            <person name="Trindade-Silva A.E."/>
            <person name="Soares C.A.G."/>
            <person name="Elshahawi S."/>
            <person name="Hanora A."/>
            <person name="Schmidt E.W."/>
            <person name="Haygood M.G."/>
            <person name="Posfai J."/>
            <person name="Benner J."/>
            <person name="Madinger C."/>
            <person name="Nove J."/>
            <person name="Anton B."/>
            <person name="Chaudhary K."/>
            <person name="Foster J."/>
            <person name="Holman A."/>
            <person name="Kumar S."/>
            <person name="Lessard P.A."/>
            <person name="Luyten Y.A."/>
            <person name="Slatko B."/>
            <person name="Wood N."/>
            <person name="Wu B."/>
            <person name="Teplitski M."/>
            <person name="Mougous J.D."/>
            <person name="Ward N."/>
            <person name="Eisen J.A."/>
            <person name="Badger J.H."/>
            <person name="Distel D.L."/>
        </authorList>
    </citation>
    <scope>NUCLEOTIDE SEQUENCE [LARGE SCALE GENOMIC DNA]</scope>
    <source>
        <strain>ATCC 39867 / T7901</strain>
    </source>
</reference>
<organism>
    <name type="scientific">Teredinibacter turnerae (strain ATCC 39867 / T7901)</name>
    <dbReference type="NCBI Taxonomy" id="377629"/>
    <lineage>
        <taxon>Bacteria</taxon>
        <taxon>Pseudomonadati</taxon>
        <taxon>Pseudomonadota</taxon>
        <taxon>Gammaproteobacteria</taxon>
        <taxon>Cellvibrionales</taxon>
        <taxon>Cellvibrionaceae</taxon>
        <taxon>Teredinibacter</taxon>
    </lineage>
</organism>
<accession>C5BS85</accession>
<proteinExistence type="inferred from homology"/>
<name>RISB_TERTT</name>
<dbReference type="EC" id="2.5.1.78" evidence="1"/>
<dbReference type="EMBL" id="CP001614">
    <property type="protein sequence ID" value="ACR14319.1"/>
    <property type="molecule type" value="Genomic_DNA"/>
</dbReference>
<dbReference type="RefSeq" id="WP_015820435.1">
    <property type="nucleotide sequence ID" value="NC_012997.1"/>
</dbReference>
<dbReference type="SMR" id="C5BS85"/>
<dbReference type="STRING" id="377629.TERTU_3701"/>
<dbReference type="GeneID" id="58411008"/>
<dbReference type="KEGG" id="ttu:TERTU_3701"/>
<dbReference type="eggNOG" id="COG0054">
    <property type="taxonomic scope" value="Bacteria"/>
</dbReference>
<dbReference type="HOGENOM" id="CLU_089358_1_1_6"/>
<dbReference type="OrthoDB" id="9809709at2"/>
<dbReference type="UniPathway" id="UPA00275">
    <property type="reaction ID" value="UER00404"/>
</dbReference>
<dbReference type="Proteomes" id="UP000009080">
    <property type="component" value="Chromosome"/>
</dbReference>
<dbReference type="GO" id="GO:0005829">
    <property type="term" value="C:cytosol"/>
    <property type="evidence" value="ECO:0007669"/>
    <property type="project" value="TreeGrafter"/>
</dbReference>
<dbReference type="GO" id="GO:0009349">
    <property type="term" value="C:riboflavin synthase complex"/>
    <property type="evidence" value="ECO:0007669"/>
    <property type="project" value="InterPro"/>
</dbReference>
<dbReference type="GO" id="GO:0000906">
    <property type="term" value="F:6,7-dimethyl-8-ribityllumazine synthase activity"/>
    <property type="evidence" value="ECO:0007669"/>
    <property type="project" value="UniProtKB-UniRule"/>
</dbReference>
<dbReference type="GO" id="GO:0009231">
    <property type="term" value="P:riboflavin biosynthetic process"/>
    <property type="evidence" value="ECO:0007669"/>
    <property type="project" value="UniProtKB-UniRule"/>
</dbReference>
<dbReference type="CDD" id="cd09209">
    <property type="entry name" value="Lumazine_synthase-I"/>
    <property type="match status" value="1"/>
</dbReference>
<dbReference type="FunFam" id="3.40.50.960:FF:000001">
    <property type="entry name" value="6,7-dimethyl-8-ribityllumazine synthase"/>
    <property type="match status" value="1"/>
</dbReference>
<dbReference type="Gene3D" id="3.40.50.960">
    <property type="entry name" value="Lumazine/riboflavin synthase"/>
    <property type="match status" value="1"/>
</dbReference>
<dbReference type="HAMAP" id="MF_00178">
    <property type="entry name" value="Lumazine_synth"/>
    <property type="match status" value="1"/>
</dbReference>
<dbReference type="InterPro" id="IPR034964">
    <property type="entry name" value="LS"/>
</dbReference>
<dbReference type="InterPro" id="IPR002180">
    <property type="entry name" value="LS/RS"/>
</dbReference>
<dbReference type="InterPro" id="IPR036467">
    <property type="entry name" value="LS/RS_sf"/>
</dbReference>
<dbReference type="NCBIfam" id="TIGR00114">
    <property type="entry name" value="lumazine-synth"/>
    <property type="match status" value="1"/>
</dbReference>
<dbReference type="NCBIfam" id="NF000812">
    <property type="entry name" value="PRK00061.1-4"/>
    <property type="match status" value="1"/>
</dbReference>
<dbReference type="PANTHER" id="PTHR21058:SF0">
    <property type="entry name" value="6,7-DIMETHYL-8-RIBITYLLUMAZINE SYNTHASE"/>
    <property type="match status" value="1"/>
</dbReference>
<dbReference type="PANTHER" id="PTHR21058">
    <property type="entry name" value="6,7-DIMETHYL-8-RIBITYLLUMAZINE SYNTHASE DMRL SYNTHASE LUMAZINE SYNTHASE"/>
    <property type="match status" value="1"/>
</dbReference>
<dbReference type="Pfam" id="PF00885">
    <property type="entry name" value="DMRL_synthase"/>
    <property type="match status" value="1"/>
</dbReference>
<dbReference type="SUPFAM" id="SSF52121">
    <property type="entry name" value="Lumazine synthase"/>
    <property type="match status" value="1"/>
</dbReference>
<evidence type="ECO:0000255" key="1">
    <source>
        <dbReference type="HAMAP-Rule" id="MF_00178"/>
    </source>
</evidence>
<protein>
    <recommendedName>
        <fullName evidence="1">6,7-dimethyl-8-ribityllumazine synthase</fullName>
        <shortName evidence="1">DMRL synthase</shortName>
        <shortName evidence="1">LS</shortName>
        <shortName evidence="1">Lumazine synthase</shortName>
        <ecNumber evidence="1">2.5.1.78</ecNumber>
    </recommendedName>
</protein>
<gene>
    <name evidence="1" type="primary">ribH</name>
    <name type="ordered locus">TERTU_3701</name>
</gene>